<evidence type="ECO:0000255" key="1">
    <source>
        <dbReference type="HAMAP-Rule" id="MF_00454"/>
    </source>
</evidence>
<name>FLUC_SALAR</name>
<protein>
    <recommendedName>
        <fullName evidence="1">Fluoride-specific ion channel FluC</fullName>
    </recommendedName>
</protein>
<comment type="function">
    <text evidence="1">Fluoride-specific ion channel. Important for reducing fluoride concentration in the cell, thus reducing its toxicity.</text>
</comment>
<comment type="catalytic activity">
    <reaction evidence="1">
        <text>fluoride(in) = fluoride(out)</text>
        <dbReference type="Rhea" id="RHEA:76159"/>
        <dbReference type="ChEBI" id="CHEBI:17051"/>
    </reaction>
    <physiologicalReaction direction="left-to-right" evidence="1">
        <dbReference type="Rhea" id="RHEA:76160"/>
    </physiologicalReaction>
</comment>
<comment type="activity regulation">
    <text evidence="1">Na(+) is not transported, but it plays an essential structural role and its presence is essential for fluoride channel function.</text>
</comment>
<comment type="subcellular location">
    <subcellularLocation>
        <location evidence="1">Cell inner membrane</location>
        <topology evidence="1">Multi-pass membrane protein</topology>
    </subcellularLocation>
</comment>
<comment type="similarity">
    <text evidence="1">Belongs to the fluoride channel Fluc/FEX (TC 1.A.43) family.</text>
</comment>
<feature type="chain" id="PRO_1000081017" description="Fluoride-specific ion channel FluC">
    <location>
        <begin position="1"/>
        <end position="127"/>
    </location>
</feature>
<feature type="transmembrane region" description="Helical" evidence="1">
    <location>
        <begin position="4"/>
        <end position="24"/>
    </location>
</feature>
<feature type="transmembrane region" description="Helical" evidence="1">
    <location>
        <begin position="35"/>
        <end position="55"/>
    </location>
</feature>
<feature type="transmembrane region" description="Helical" evidence="1">
    <location>
        <begin position="71"/>
        <end position="91"/>
    </location>
</feature>
<feature type="transmembrane region" description="Helical" evidence="1">
    <location>
        <begin position="103"/>
        <end position="123"/>
    </location>
</feature>
<feature type="binding site" evidence="1">
    <location>
        <position position="75"/>
    </location>
    <ligand>
        <name>Na(+)</name>
        <dbReference type="ChEBI" id="CHEBI:29101"/>
        <note>structural</note>
    </ligand>
</feature>
<feature type="binding site" evidence="1">
    <location>
        <position position="78"/>
    </location>
    <ligand>
        <name>Na(+)</name>
        <dbReference type="ChEBI" id="CHEBI:29101"/>
        <note>structural</note>
    </ligand>
</feature>
<sequence length="127" mass="13849">MLQLLLAVFIGGGTGSVARWMLSMRFNPLHQAIPIGTLTANLLGAFIIGMGFAWFNRMTHIDPMWKVLITTGFCGGLTTFSTFSAEVVFLLQEGRFGWALLNVLINLLGSFAMTALAFWLFSAAAAR</sequence>
<accession>A9MKE7</accession>
<organism>
    <name type="scientific">Salmonella arizonae (strain ATCC BAA-731 / CDC346-86 / RSK2980)</name>
    <dbReference type="NCBI Taxonomy" id="41514"/>
    <lineage>
        <taxon>Bacteria</taxon>
        <taxon>Pseudomonadati</taxon>
        <taxon>Pseudomonadota</taxon>
        <taxon>Gammaproteobacteria</taxon>
        <taxon>Enterobacterales</taxon>
        <taxon>Enterobacteriaceae</taxon>
        <taxon>Salmonella</taxon>
    </lineage>
</organism>
<reference key="1">
    <citation type="submission" date="2007-11" db="EMBL/GenBank/DDBJ databases">
        <authorList>
            <consortium name="The Salmonella enterica serovar Arizonae Genome Sequencing Project"/>
            <person name="McClelland M."/>
            <person name="Sanderson E.K."/>
            <person name="Porwollik S."/>
            <person name="Spieth J."/>
            <person name="Clifton W.S."/>
            <person name="Fulton R."/>
            <person name="Chunyan W."/>
            <person name="Wollam A."/>
            <person name="Shah N."/>
            <person name="Pepin K."/>
            <person name="Bhonagiri V."/>
            <person name="Nash W."/>
            <person name="Johnson M."/>
            <person name="Thiruvilangam P."/>
            <person name="Wilson R."/>
        </authorList>
    </citation>
    <scope>NUCLEOTIDE SEQUENCE [LARGE SCALE GENOMIC DNA]</scope>
    <source>
        <strain>ATCC BAA-731 / CDC346-86 / RSK2980</strain>
    </source>
</reference>
<keyword id="KW-0997">Cell inner membrane</keyword>
<keyword id="KW-1003">Cell membrane</keyword>
<keyword id="KW-0407">Ion channel</keyword>
<keyword id="KW-0406">Ion transport</keyword>
<keyword id="KW-0472">Membrane</keyword>
<keyword id="KW-0479">Metal-binding</keyword>
<keyword id="KW-1185">Reference proteome</keyword>
<keyword id="KW-0915">Sodium</keyword>
<keyword id="KW-0812">Transmembrane</keyword>
<keyword id="KW-1133">Transmembrane helix</keyword>
<keyword id="KW-0813">Transport</keyword>
<proteinExistence type="inferred from homology"/>
<dbReference type="EMBL" id="CP000880">
    <property type="protein sequence ID" value="ABX22166.1"/>
    <property type="molecule type" value="Genomic_DNA"/>
</dbReference>
<dbReference type="SMR" id="A9MKE7"/>
<dbReference type="STRING" id="41514.SARI_02303"/>
<dbReference type="KEGG" id="ses:SARI_02303"/>
<dbReference type="HOGENOM" id="CLU_114342_3_3_6"/>
<dbReference type="Proteomes" id="UP000002084">
    <property type="component" value="Chromosome"/>
</dbReference>
<dbReference type="GO" id="GO:0005886">
    <property type="term" value="C:plasma membrane"/>
    <property type="evidence" value="ECO:0007669"/>
    <property type="project" value="UniProtKB-SubCell"/>
</dbReference>
<dbReference type="GO" id="GO:0062054">
    <property type="term" value="F:fluoride channel activity"/>
    <property type="evidence" value="ECO:0007669"/>
    <property type="project" value="UniProtKB-UniRule"/>
</dbReference>
<dbReference type="GO" id="GO:0046872">
    <property type="term" value="F:metal ion binding"/>
    <property type="evidence" value="ECO:0007669"/>
    <property type="project" value="UniProtKB-KW"/>
</dbReference>
<dbReference type="GO" id="GO:0140114">
    <property type="term" value="P:cellular detoxification of fluoride"/>
    <property type="evidence" value="ECO:0007669"/>
    <property type="project" value="UniProtKB-UniRule"/>
</dbReference>
<dbReference type="HAMAP" id="MF_00454">
    <property type="entry name" value="FluC"/>
    <property type="match status" value="1"/>
</dbReference>
<dbReference type="InterPro" id="IPR003691">
    <property type="entry name" value="FluC"/>
</dbReference>
<dbReference type="NCBIfam" id="TIGR00494">
    <property type="entry name" value="crcB"/>
    <property type="match status" value="1"/>
</dbReference>
<dbReference type="NCBIfam" id="NF010792">
    <property type="entry name" value="PRK14196.1"/>
    <property type="match status" value="1"/>
</dbReference>
<dbReference type="PANTHER" id="PTHR28259">
    <property type="entry name" value="FLUORIDE EXPORT PROTEIN 1-RELATED"/>
    <property type="match status" value="1"/>
</dbReference>
<dbReference type="PANTHER" id="PTHR28259:SF1">
    <property type="entry name" value="FLUORIDE EXPORT PROTEIN 1-RELATED"/>
    <property type="match status" value="1"/>
</dbReference>
<dbReference type="Pfam" id="PF02537">
    <property type="entry name" value="CRCB"/>
    <property type="match status" value="1"/>
</dbReference>
<gene>
    <name evidence="1" type="primary">fluC</name>
    <name evidence="1" type="synonym">crcB</name>
    <name type="ordered locus">SARI_02303</name>
</gene>